<gene>
    <name evidence="1" type="primary">metXA</name>
    <name type="ordered locus">Moth_1308</name>
</gene>
<feature type="chain" id="PRO_0000231873" description="Homoserine O-acetyltransferase">
    <location>
        <begin position="1"/>
        <end position="374"/>
    </location>
</feature>
<feature type="domain" description="AB hydrolase-1" evidence="1">
    <location>
        <begin position="45"/>
        <end position="353"/>
    </location>
</feature>
<feature type="active site" description="Nucleophile" evidence="1">
    <location>
        <position position="151"/>
    </location>
</feature>
<feature type="active site" evidence="1">
    <location>
        <position position="314"/>
    </location>
</feature>
<feature type="active site" evidence="1">
    <location>
        <position position="347"/>
    </location>
</feature>
<feature type="binding site" evidence="1">
    <location>
        <position position="220"/>
    </location>
    <ligand>
        <name>substrate</name>
    </ligand>
</feature>
<feature type="binding site" evidence="1">
    <location>
        <position position="348"/>
    </location>
    <ligand>
        <name>substrate</name>
    </ligand>
</feature>
<reference key="1">
    <citation type="journal article" date="2008" name="Environ. Microbiol.">
        <title>The complete genome sequence of Moorella thermoacetica (f. Clostridium thermoaceticum).</title>
        <authorList>
            <person name="Pierce E."/>
            <person name="Xie G."/>
            <person name="Barabote R.D."/>
            <person name="Saunders E."/>
            <person name="Han C.S."/>
            <person name="Detter J.C."/>
            <person name="Richardson P."/>
            <person name="Brettin T.S."/>
            <person name="Das A."/>
            <person name="Ljungdahl L.G."/>
            <person name="Ragsdale S.W."/>
        </authorList>
    </citation>
    <scope>NUCLEOTIDE SEQUENCE [LARGE SCALE GENOMIC DNA]</scope>
    <source>
        <strain>ATCC 39073 / JCM 9320</strain>
    </source>
</reference>
<organism>
    <name type="scientific">Moorella thermoacetica (strain ATCC 39073 / JCM 9320)</name>
    <dbReference type="NCBI Taxonomy" id="264732"/>
    <lineage>
        <taxon>Bacteria</taxon>
        <taxon>Bacillati</taxon>
        <taxon>Bacillota</taxon>
        <taxon>Clostridia</taxon>
        <taxon>Moorellales</taxon>
        <taxon>Moorellaceae</taxon>
        <taxon>Moorella</taxon>
    </lineage>
</organism>
<name>METXA_MOOTA</name>
<comment type="function">
    <text evidence="1">Transfers an acetyl group from acetyl-CoA to L-homoserine, forming acetyl-L-homoserine.</text>
</comment>
<comment type="catalytic activity">
    <reaction evidence="1">
        <text>L-homoserine + acetyl-CoA = O-acetyl-L-homoserine + CoA</text>
        <dbReference type="Rhea" id="RHEA:13701"/>
        <dbReference type="ChEBI" id="CHEBI:57287"/>
        <dbReference type="ChEBI" id="CHEBI:57288"/>
        <dbReference type="ChEBI" id="CHEBI:57476"/>
        <dbReference type="ChEBI" id="CHEBI:57716"/>
        <dbReference type="EC" id="2.3.1.31"/>
    </reaction>
</comment>
<comment type="pathway">
    <text evidence="1">Amino-acid biosynthesis; L-methionine biosynthesis via de novo pathway; O-acetyl-L-homoserine from L-homoserine: step 1/1.</text>
</comment>
<comment type="subunit">
    <text evidence="1">Homodimer.</text>
</comment>
<comment type="subcellular location">
    <subcellularLocation>
        <location evidence="1">Cytoplasm</location>
    </subcellularLocation>
</comment>
<comment type="similarity">
    <text evidence="1">Belongs to the AB hydrolase superfamily. MetX family.</text>
</comment>
<keyword id="KW-0012">Acyltransferase</keyword>
<keyword id="KW-0028">Amino-acid biosynthesis</keyword>
<keyword id="KW-0963">Cytoplasm</keyword>
<keyword id="KW-0486">Methionine biosynthesis</keyword>
<keyword id="KW-0808">Transferase</keyword>
<dbReference type="EC" id="2.3.1.31" evidence="1"/>
<dbReference type="EMBL" id="CP000232">
    <property type="protein sequence ID" value="ABC19621.1"/>
    <property type="molecule type" value="Genomic_DNA"/>
</dbReference>
<dbReference type="RefSeq" id="YP_430164.1">
    <property type="nucleotide sequence ID" value="NC_007644.1"/>
</dbReference>
<dbReference type="SMR" id="Q2RIW8"/>
<dbReference type="STRING" id="264732.Moth_1308"/>
<dbReference type="ESTHER" id="moota-metx">
    <property type="family name" value="Homoserine_transacetylase"/>
</dbReference>
<dbReference type="EnsemblBacteria" id="ABC19621">
    <property type="protein sequence ID" value="ABC19621"/>
    <property type="gene ID" value="Moth_1308"/>
</dbReference>
<dbReference type="KEGG" id="mta:Moth_1308"/>
<dbReference type="PATRIC" id="fig|264732.11.peg.1405"/>
<dbReference type="eggNOG" id="COG2021">
    <property type="taxonomic scope" value="Bacteria"/>
</dbReference>
<dbReference type="HOGENOM" id="CLU_028760_1_2_9"/>
<dbReference type="OrthoDB" id="9800754at2"/>
<dbReference type="UniPathway" id="UPA00051">
    <property type="reaction ID" value="UER00074"/>
</dbReference>
<dbReference type="GO" id="GO:0005737">
    <property type="term" value="C:cytoplasm"/>
    <property type="evidence" value="ECO:0007669"/>
    <property type="project" value="UniProtKB-SubCell"/>
</dbReference>
<dbReference type="GO" id="GO:0004414">
    <property type="term" value="F:homoserine O-acetyltransferase activity"/>
    <property type="evidence" value="ECO:0007669"/>
    <property type="project" value="UniProtKB-UniRule"/>
</dbReference>
<dbReference type="GO" id="GO:0009092">
    <property type="term" value="P:homoserine metabolic process"/>
    <property type="evidence" value="ECO:0007669"/>
    <property type="project" value="TreeGrafter"/>
</dbReference>
<dbReference type="GO" id="GO:0009086">
    <property type="term" value="P:methionine biosynthetic process"/>
    <property type="evidence" value="ECO:0007669"/>
    <property type="project" value="UniProtKB-UniRule"/>
</dbReference>
<dbReference type="FunFam" id="1.10.1740.110:FF:000001">
    <property type="entry name" value="Homoserine O-acetyltransferase"/>
    <property type="match status" value="1"/>
</dbReference>
<dbReference type="Gene3D" id="1.10.1740.110">
    <property type="match status" value="1"/>
</dbReference>
<dbReference type="Gene3D" id="3.40.50.1820">
    <property type="entry name" value="alpha/beta hydrolase"/>
    <property type="match status" value="1"/>
</dbReference>
<dbReference type="HAMAP" id="MF_00296">
    <property type="entry name" value="MetX_acyltransf"/>
    <property type="match status" value="1"/>
</dbReference>
<dbReference type="InterPro" id="IPR000073">
    <property type="entry name" value="AB_hydrolase_1"/>
</dbReference>
<dbReference type="InterPro" id="IPR029058">
    <property type="entry name" value="AB_hydrolase_fold"/>
</dbReference>
<dbReference type="InterPro" id="IPR008220">
    <property type="entry name" value="HAT_MetX-like"/>
</dbReference>
<dbReference type="NCBIfam" id="TIGR01392">
    <property type="entry name" value="homoserO_Ac_trn"/>
    <property type="match status" value="1"/>
</dbReference>
<dbReference type="NCBIfam" id="NF001209">
    <property type="entry name" value="PRK00175.1"/>
    <property type="match status" value="1"/>
</dbReference>
<dbReference type="PANTHER" id="PTHR32268">
    <property type="entry name" value="HOMOSERINE O-ACETYLTRANSFERASE"/>
    <property type="match status" value="1"/>
</dbReference>
<dbReference type="PANTHER" id="PTHR32268:SF11">
    <property type="entry name" value="HOMOSERINE O-ACETYLTRANSFERASE"/>
    <property type="match status" value="1"/>
</dbReference>
<dbReference type="Pfam" id="PF00561">
    <property type="entry name" value="Abhydrolase_1"/>
    <property type="match status" value="1"/>
</dbReference>
<dbReference type="PIRSF" id="PIRSF000443">
    <property type="entry name" value="Homoser_Ac_trans"/>
    <property type="match status" value="1"/>
</dbReference>
<dbReference type="SUPFAM" id="SSF53474">
    <property type="entry name" value="alpha/beta-Hydrolases"/>
    <property type="match status" value="1"/>
</dbReference>
<accession>Q2RIW8</accession>
<sequence>MDGVGIVTTRFYEWSQCLHLESGAQLGSLTIAYETYGELNAAGNNAILVLHALTGNAHIAGRNFPDERYPGWWDPLVGPGRALDTRRYFIVCANVLGSCYGTTGPASINPATGKPYGMDFPAITIRDMVRAQKILLDYLGVKRLVAAIGGSMGGMQVLEWGFLYPQMLDAIIPIATCGRTTPMQIAFHHVQREAIYADPDWQGGNYYGTAGPRRGLALARQIGIITYKSDPSWNMKFGRNLVDPRKYFQLEGQFEVESYLAYQGRKLVDRFDANSYLYLTKAVDLHDVSQGRGSYNEVWRDFPCPCLGIGISSDFLFPPYQVQEIVRMINDGGGHARYAEIDSPYGHDAFLIEFNQLAAIIQPFLKELRPDLAA</sequence>
<protein>
    <recommendedName>
        <fullName evidence="1">Homoserine O-acetyltransferase</fullName>
        <shortName evidence="1">HAT</shortName>
        <ecNumber evidence="1">2.3.1.31</ecNumber>
    </recommendedName>
    <alternativeName>
        <fullName evidence="1">Homoserine transacetylase</fullName>
        <shortName evidence="1">HTA</shortName>
    </alternativeName>
</protein>
<proteinExistence type="inferred from homology"/>
<evidence type="ECO:0000255" key="1">
    <source>
        <dbReference type="HAMAP-Rule" id="MF_00296"/>
    </source>
</evidence>